<comment type="function">
    <text evidence="2">Binds as a heterodimer with protein bS6 to the central domain of the 16S rRNA, where it helps stabilize the platform of the 30S subunit.</text>
</comment>
<comment type="subunit">
    <text evidence="2">Part of the 30S ribosomal subunit. Forms a tight heterodimer with protein bS6.</text>
</comment>
<comment type="similarity">
    <text evidence="3">Belongs to the bacterial ribosomal protein bS18 family.</text>
</comment>
<protein>
    <recommendedName>
        <fullName evidence="3">Small ribosomal subunit protein bS18</fullName>
    </recommendedName>
    <alternativeName>
        <fullName>30S ribosomal protein S18</fullName>
    </alternativeName>
</protein>
<feature type="initiator methionine" description="Removed" evidence="1">
    <location>
        <position position="1"/>
    </location>
</feature>
<feature type="chain" id="PRO_0000111202" description="Small ribosomal subunit protein bS18">
    <location>
        <begin position="2"/>
        <end position="75"/>
    </location>
</feature>
<feature type="modified residue" description="N-acetylalanine" evidence="1">
    <location>
        <position position="2"/>
    </location>
</feature>
<keyword id="KW-0007">Acetylation</keyword>
<keyword id="KW-1185">Reference proteome</keyword>
<keyword id="KW-0687">Ribonucleoprotein</keyword>
<keyword id="KW-0689">Ribosomal protein</keyword>
<keyword id="KW-0694">RNA-binding</keyword>
<keyword id="KW-0699">rRNA-binding</keyword>
<organism>
    <name type="scientific">Photorhabdus laumondii subsp. laumondii (strain DSM 15139 / CIP 105565 / TT01)</name>
    <name type="common">Photorhabdus luminescens subsp. laumondii</name>
    <dbReference type="NCBI Taxonomy" id="243265"/>
    <lineage>
        <taxon>Bacteria</taxon>
        <taxon>Pseudomonadati</taxon>
        <taxon>Pseudomonadota</taxon>
        <taxon>Gammaproteobacteria</taxon>
        <taxon>Enterobacterales</taxon>
        <taxon>Morganellaceae</taxon>
        <taxon>Photorhabdus</taxon>
    </lineage>
</organism>
<name>RS18_PHOLL</name>
<sequence>MARYFRRRKFCRFTAEGVQEIDYKDIATLKNYITESGKIVPSRITGTRAKYQRQLARAIKRARYLSLLPYTDRHQ</sequence>
<gene>
    <name type="primary">rpsR</name>
    <name type="ordered locus">plu4571</name>
</gene>
<accession>P0A7U0</accession>
<accession>P02374</accession>
<proteinExistence type="inferred from homology"/>
<dbReference type="EMBL" id="BX571874">
    <property type="protein sequence ID" value="CAE16943.1"/>
    <property type="molecule type" value="Genomic_DNA"/>
</dbReference>
<dbReference type="RefSeq" id="WP_000135199.1">
    <property type="nucleotide sequence ID" value="NC_005126.1"/>
</dbReference>
<dbReference type="SMR" id="P0A7U0"/>
<dbReference type="STRING" id="243265.plu4571"/>
<dbReference type="GeneID" id="98186237"/>
<dbReference type="KEGG" id="plu:plu4571"/>
<dbReference type="eggNOG" id="COG0238">
    <property type="taxonomic scope" value="Bacteria"/>
</dbReference>
<dbReference type="HOGENOM" id="CLU_148710_2_3_6"/>
<dbReference type="OrthoDB" id="9812008at2"/>
<dbReference type="Proteomes" id="UP000002514">
    <property type="component" value="Chromosome"/>
</dbReference>
<dbReference type="GO" id="GO:0022627">
    <property type="term" value="C:cytosolic small ribosomal subunit"/>
    <property type="evidence" value="ECO:0007669"/>
    <property type="project" value="TreeGrafter"/>
</dbReference>
<dbReference type="GO" id="GO:0070181">
    <property type="term" value="F:small ribosomal subunit rRNA binding"/>
    <property type="evidence" value="ECO:0007669"/>
    <property type="project" value="TreeGrafter"/>
</dbReference>
<dbReference type="GO" id="GO:0003735">
    <property type="term" value="F:structural constituent of ribosome"/>
    <property type="evidence" value="ECO:0007669"/>
    <property type="project" value="InterPro"/>
</dbReference>
<dbReference type="GO" id="GO:0006412">
    <property type="term" value="P:translation"/>
    <property type="evidence" value="ECO:0007669"/>
    <property type="project" value="UniProtKB-UniRule"/>
</dbReference>
<dbReference type="FunFam" id="4.10.640.10:FF:000001">
    <property type="entry name" value="30S ribosomal protein S18"/>
    <property type="match status" value="1"/>
</dbReference>
<dbReference type="Gene3D" id="4.10.640.10">
    <property type="entry name" value="Ribosomal protein S18"/>
    <property type="match status" value="1"/>
</dbReference>
<dbReference type="HAMAP" id="MF_00270">
    <property type="entry name" value="Ribosomal_bS18"/>
    <property type="match status" value="1"/>
</dbReference>
<dbReference type="InterPro" id="IPR001648">
    <property type="entry name" value="Ribosomal_bS18"/>
</dbReference>
<dbReference type="InterPro" id="IPR018275">
    <property type="entry name" value="Ribosomal_bS18_CS"/>
</dbReference>
<dbReference type="InterPro" id="IPR036870">
    <property type="entry name" value="Ribosomal_bS18_sf"/>
</dbReference>
<dbReference type="NCBIfam" id="TIGR00165">
    <property type="entry name" value="S18"/>
    <property type="match status" value="1"/>
</dbReference>
<dbReference type="PANTHER" id="PTHR13479">
    <property type="entry name" value="30S RIBOSOMAL PROTEIN S18"/>
    <property type="match status" value="1"/>
</dbReference>
<dbReference type="PANTHER" id="PTHR13479:SF40">
    <property type="entry name" value="SMALL RIBOSOMAL SUBUNIT PROTEIN BS18M"/>
    <property type="match status" value="1"/>
</dbReference>
<dbReference type="Pfam" id="PF01084">
    <property type="entry name" value="Ribosomal_S18"/>
    <property type="match status" value="1"/>
</dbReference>
<dbReference type="PRINTS" id="PR00974">
    <property type="entry name" value="RIBOSOMALS18"/>
</dbReference>
<dbReference type="SUPFAM" id="SSF46911">
    <property type="entry name" value="Ribosomal protein S18"/>
    <property type="match status" value="1"/>
</dbReference>
<dbReference type="PROSITE" id="PS00057">
    <property type="entry name" value="RIBOSOMAL_S18"/>
    <property type="match status" value="1"/>
</dbReference>
<evidence type="ECO:0000250" key="1"/>
<evidence type="ECO:0000255" key="2">
    <source>
        <dbReference type="HAMAP-Rule" id="MF_00270"/>
    </source>
</evidence>
<evidence type="ECO:0000305" key="3"/>
<reference key="1">
    <citation type="journal article" date="2003" name="Nat. Biotechnol.">
        <title>The genome sequence of the entomopathogenic bacterium Photorhabdus luminescens.</title>
        <authorList>
            <person name="Duchaud E."/>
            <person name="Rusniok C."/>
            <person name="Frangeul L."/>
            <person name="Buchrieser C."/>
            <person name="Givaudan A."/>
            <person name="Taourit S."/>
            <person name="Bocs S."/>
            <person name="Boursaux-Eude C."/>
            <person name="Chandler M."/>
            <person name="Charles J.-F."/>
            <person name="Dassa E."/>
            <person name="Derose R."/>
            <person name="Derzelle S."/>
            <person name="Freyssinet G."/>
            <person name="Gaudriault S."/>
            <person name="Medigue C."/>
            <person name="Lanois A."/>
            <person name="Powell K."/>
            <person name="Siguier P."/>
            <person name="Vincent R."/>
            <person name="Wingate V."/>
            <person name="Zouine M."/>
            <person name="Glaser P."/>
            <person name="Boemare N."/>
            <person name="Danchin A."/>
            <person name="Kunst F."/>
        </authorList>
    </citation>
    <scope>NUCLEOTIDE SEQUENCE [LARGE SCALE GENOMIC DNA]</scope>
    <source>
        <strain>DSM 15139 / CIP 105565 / TT01</strain>
    </source>
</reference>